<sequence>MHTQVHTARLVHTADLDSETRQDIRQMVTGAFAGDFTETDWEHTLGGMHALIWHHGAIIAHAAVIQRRLIYRGNALRCGYVEGVAVRADWRGQRLVSALLDAVEQVMRGAYQLGALSSSARARRLYASRGWLPWHGPTSVLAPTGPVRTPDDDGTVFVLPIDISLDTSAELMCDWRAGDVW</sequence>
<comment type="function">
    <text evidence="1">Catalyzes the coenzyme A-dependent acetylation of the 2' hydroxyl or amino group of a broad spectrum of aminoglycosides. It confers resistance to aminoglycosides (By similarity).</text>
</comment>
<comment type="subunit">
    <text evidence="2">Homodimer.</text>
</comment>
<comment type="similarity">
    <text evidence="4">Belongs to the AAC(2')-I acetyltransferase family.</text>
</comment>
<proteinExistence type="inferred from homology"/>
<evidence type="ECO:0000250" key="1">
    <source>
        <dbReference type="UniProtKB" id="P94968"/>
    </source>
</evidence>
<evidence type="ECO:0000250" key="2">
    <source>
        <dbReference type="UniProtKB" id="P9WQG9"/>
    </source>
</evidence>
<evidence type="ECO:0000255" key="3">
    <source>
        <dbReference type="PROSITE-ProRule" id="PRU00532"/>
    </source>
</evidence>
<evidence type="ECO:0000305" key="4"/>
<gene>
    <name type="primary">aac</name>
    <name type="ordered locus">BQ2027_MB0268C</name>
</gene>
<organism>
    <name type="scientific">Mycobacterium bovis (strain ATCC BAA-935 / AF2122/97)</name>
    <dbReference type="NCBI Taxonomy" id="233413"/>
    <lineage>
        <taxon>Bacteria</taxon>
        <taxon>Bacillati</taxon>
        <taxon>Actinomycetota</taxon>
        <taxon>Actinomycetes</taxon>
        <taxon>Mycobacteriales</taxon>
        <taxon>Mycobacteriaceae</taxon>
        <taxon>Mycobacterium</taxon>
        <taxon>Mycobacterium tuberculosis complex</taxon>
    </lineage>
</organism>
<feature type="chain" id="PRO_0000064409" description="Aminoglycoside 2'-N-acetyltransferase">
    <location>
        <begin position="1"/>
        <end position="181"/>
    </location>
</feature>
<feature type="domain" description="N-acetyltransferase" evidence="3">
    <location>
        <begin position="11"/>
        <end position="162"/>
    </location>
</feature>
<feature type="binding site" evidence="2">
    <location>
        <position position="35"/>
    </location>
    <ligand>
        <name>substrate</name>
    </ligand>
</feature>
<feature type="binding site" evidence="2">
    <location>
        <begin position="82"/>
        <end position="83"/>
    </location>
    <ligand>
        <name>substrate</name>
    </ligand>
</feature>
<feature type="binding site" evidence="2">
    <location>
        <begin position="84"/>
        <end position="86"/>
    </location>
    <ligand>
        <name>CoA</name>
        <dbReference type="ChEBI" id="CHEBI:57287"/>
    </ligand>
</feature>
<feature type="binding site" evidence="2">
    <location>
        <begin position="91"/>
        <end position="96"/>
    </location>
    <ligand>
        <name>CoA</name>
        <dbReference type="ChEBI" id="CHEBI:57287"/>
    </ligand>
</feature>
<feature type="binding site" evidence="2">
    <location>
        <position position="117"/>
    </location>
    <ligand>
        <name>substrate</name>
    </ligand>
</feature>
<feature type="binding site" evidence="2">
    <location>
        <begin position="151"/>
        <end position="152"/>
    </location>
    <ligand>
        <name>substrate</name>
    </ligand>
</feature>
<protein>
    <recommendedName>
        <fullName>Aminoglycoside 2'-N-acetyltransferase</fullName>
        <ecNumber>2.3.1.-</ecNumber>
    </recommendedName>
    <alternativeName>
        <fullName>AAC(2')-Ic</fullName>
    </alternativeName>
</protein>
<accession>P0A5N1</accession>
<accession>A0A1R3XVW4</accession>
<accession>P72033</accession>
<accession>P95219</accession>
<accession>X2BEJ5</accession>
<keyword id="KW-0012">Acyltransferase</keyword>
<keyword id="KW-0046">Antibiotic resistance</keyword>
<keyword id="KW-1185">Reference proteome</keyword>
<keyword id="KW-0808">Transferase</keyword>
<dbReference type="EC" id="2.3.1.-"/>
<dbReference type="EMBL" id="LT708304">
    <property type="protein sequence ID" value="SIT98783.1"/>
    <property type="molecule type" value="Genomic_DNA"/>
</dbReference>
<dbReference type="RefSeq" id="NP_853933.1">
    <property type="nucleotide sequence ID" value="NC_002945.3"/>
</dbReference>
<dbReference type="SMR" id="P0A5N1"/>
<dbReference type="PATRIC" id="fig|233413.5.peg.295"/>
<dbReference type="Proteomes" id="UP000001419">
    <property type="component" value="Chromosome"/>
</dbReference>
<dbReference type="GO" id="GO:0016747">
    <property type="term" value="F:acyltransferase activity, transferring groups other than amino-acyl groups"/>
    <property type="evidence" value="ECO:0007669"/>
    <property type="project" value="InterPro"/>
</dbReference>
<dbReference type="GO" id="GO:0046677">
    <property type="term" value="P:response to antibiotic"/>
    <property type="evidence" value="ECO:0007669"/>
    <property type="project" value="UniProtKB-KW"/>
</dbReference>
<dbReference type="CDD" id="cd04301">
    <property type="entry name" value="NAT_SF"/>
    <property type="match status" value="1"/>
</dbReference>
<dbReference type="FunFam" id="3.40.630.30:FF:000149">
    <property type="entry name" value="Aminoglycoside 2'-N-acetyltransferase AAC (AAC(2')-IC)"/>
    <property type="match status" value="1"/>
</dbReference>
<dbReference type="Gene3D" id="3.40.630.30">
    <property type="match status" value="1"/>
</dbReference>
<dbReference type="InterPro" id="IPR016181">
    <property type="entry name" value="Acyl_CoA_acyltransferase"/>
</dbReference>
<dbReference type="InterPro" id="IPR000182">
    <property type="entry name" value="GNAT_dom"/>
</dbReference>
<dbReference type="NCBIfam" id="NF000034">
    <property type="entry name" value="AAC_2p_Ic"/>
    <property type="match status" value="1"/>
</dbReference>
<dbReference type="Pfam" id="PF13527">
    <property type="entry name" value="Acetyltransf_9"/>
    <property type="match status" value="1"/>
</dbReference>
<dbReference type="SUPFAM" id="SSF55729">
    <property type="entry name" value="Acyl-CoA N-acyltransferases (Nat)"/>
    <property type="match status" value="1"/>
</dbReference>
<dbReference type="PROSITE" id="PS51186">
    <property type="entry name" value="GNAT"/>
    <property type="match status" value="1"/>
</dbReference>
<reference key="1">
    <citation type="journal article" date="2003" name="Proc. Natl. Acad. Sci. U.S.A.">
        <title>The complete genome sequence of Mycobacterium bovis.</title>
        <authorList>
            <person name="Garnier T."/>
            <person name="Eiglmeier K."/>
            <person name="Camus J.-C."/>
            <person name="Medina N."/>
            <person name="Mansoor H."/>
            <person name="Pryor M."/>
            <person name="Duthoy S."/>
            <person name="Grondin S."/>
            <person name="Lacroix C."/>
            <person name="Monsempe C."/>
            <person name="Simon S."/>
            <person name="Harris B."/>
            <person name="Atkin R."/>
            <person name="Doggett J."/>
            <person name="Mayes R."/>
            <person name="Keating L."/>
            <person name="Wheeler P.R."/>
            <person name="Parkhill J."/>
            <person name="Barrell B.G."/>
            <person name="Cole S.T."/>
            <person name="Gordon S.V."/>
            <person name="Hewinson R.G."/>
        </authorList>
    </citation>
    <scope>NUCLEOTIDE SEQUENCE [LARGE SCALE GENOMIC DNA]</scope>
    <source>
        <strain>ATCC BAA-935 / AF2122/97</strain>
    </source>
</reference>
<reference key="2">
    <citation type="journal article" date="2017" name="Genome Announc.">
        <title>Updated reference genome sequence and annotation of Mycobacterium bovis AF2122/97.</title>
        <authorList>
            <person name="Malone K.M."/>
            <person name="Farrell D."/>
            <person name="Stuber T.P."/>
            <person name="Schubert O.T."/>
            <person name="Aebersold R."/>
            <person name="Robbe-Austerman S."/>
            <person name="Gordon S.V."/>
        </authorList>
    </citation>
    <scope>NUCLEOTIDE SEQUENCE [LARGE SCALE GENOMIC DNA]</scope>
    <scope>GENOME REANNOTATION</scope>
    <source>
        <strain>ATCC BAA-935 / AF2122/97</strain>
    </source>
</reference>
<name>AAC2_MYCBO</name>